<feature type="signal peptide" evidence="1">
    <location>
        <begin position="1"/>
        <end position="21"/>
    </location>
</feature>
<feature type="chain" id="PRO_0000013683" description="Uncharacterized protein AF_2134">
    <location>
        <begin position="22"/>
        <end position="96"/>
    </location>
</feature>
<name>Y2134_ARCFU</name>
<keyword id="KW-1185">Reference proteome</keyword>
<keyword id="KW-0732">Signal</keyword>
<accession>O28146</accession>
<sequence>MLASVLILGAIAVGSAIPTIAELKVDRSLCRKSPMEEFYVFENGEWVKKEELADWWLCIDVDSIERSDYYSAAKKAIELQKLGRDSPYYGGEWIGC</sequence>
<proteinExistence type="inferred from homology"/>
<organism>
    <name type="scientific">Archaeoglobus fulgidus (strain ATCC 49558 / DSM 4304 / JCM 9628 / NBRC 100126 / VC-16)</name>
    <dbReference type="NCBI Taxonomy" id="224325"/>
    <lineage>
        <taxon>Archaea</taxon>
        <taxon>Methanobacteriati</taxon>
        <taxon>Methanobacteriota</taxon>
        <taxon>Archaeoglobi</taxon>
        <taxon>Archaeoglobales</taxon>
        <taxon>Archaeoglobaceae</taxon>
        <taxon>Archaeoglobus</taxon>
    </lineage>
</organism>
<evidence type="ECO:0000255" key="1"/>
<protein>
    <recommendedName>
        <fullName>Uncharacterized protein AF_2134</fullName>
    </recommendedName>
</protein>
<reference key="1">
    <citation type="journal article" date="1997" name="Nature">
        <title>The complete genome sequence of the hyperthermophilic, sulphate-reducing archaeon Archaeoglobus fulgidus.</title>
        <authorList>
            <person name="Klenk H.-P."/>
            <person name="Clayton R.A."/>
            <person name="Tomb J.-F."/>
            <person name="White O."/>
            <person name="Nelson K.E."/>
            <person name="Ketchum K.A."/>
            <person name="Dodson R.J."/>
            <person name="Gwinn M.L."/>
            <person name="Hickey E.K."/>
            <person name="Peterson J.D."/>
            <person name="Richardson D.L."/>
            <person name="Kerlavage A.R."/>
            <person name="Graham D.E."/>
            <person name="Kyrpides N.C."/>
            <person name="Fleischmann R.D."/>
            <person name="Quackenbush J."/>
            <person name="Lee N.H."/>
            <person name="Sutton G.G."/>
            <person name="Gill S.R."/>
            <person name="Kirkness E.F."/>
            <person name="Dougherty B.A."/>
            <person name="McKenney K."/>
            <person name="Adams M.D."/>
            <person name="Loftus B.J."/>
            <person name="Peterson S.N."/>
            <person name="Reich C.I."/>
            <person name="McNeil L.K."/>
            <person name="Badger J.H."/>
            <person name="Glodek A."/>
            <person name="Zhou L."/>
            <person name="Overbeek R."/>
            <person name="Gocayne J.D."/>
            <person name="Weidman J.F."/>
            <person name="McDonald L.A."/>
            <person name="Utterback T.R."/>
            <person name="Cotton M.D."/>
            <person name="Spriggs T."/>
            <person name="Artiach P."/>
            <person name="Kaine B.P."/>
            <person name="Sykes S.M."/>
            <person name="Sadow P.W."/>
            <person name="D'Andrea K.P."/>
            <person name="Bowman C."/>
            <person name="Fujii C."/>
            <person name="Garland S.A."/>
            <person name="Mason T.M."/>
            <person name="Olsen G.J."/>
            <person name="Fraser C.M."/>
            <person name="Smith H.O."/>
            <person name="Woese C.R."/>
            <person name="Venter J.C."/>
        </authorList>
    </citation>
    <scope>NUCLEOTIDE SEQUENCE [LARGE SCALE GENOMIC DNA]</scope>
    <source>
        <strain>ATCC 49558 / DSM 4304 / JCM 9628 / NBRC 100126 / VC-16</strain>
    </source>
</reference>
<dbReference type="EMBL" id="AE000782">
    <property type="protein sequence ID" value="AAB89126.1"/>
    <property type="molecule type" value="Genomic_DNA"/>
</dbReference>
<dbReference type="PIR" id="F69516">
    <property type="entry name" value="F69516"/>
</dbReference>
<dbReference type="RefSeq" id="WP_010879625.1">
    <property type="nucleotide sequence ID" value="NC_000917.1"/>
</dbReference>
<dbReference type="STRING" id="224325.AF_2134"/>
<dbReference type="PaxDb" id="224325-AF_2134"/>
<dbReference type="EnsemblBacteria" id="AAB89126">
    <property type="protein sequence ID" value="AAB89126"/>
    <property type="gene ID" value="AF_2134"/>
</dbReference>
<dbReference type="KEGG" id="afu:AF_2134"/>
<dbReference type="HOGENOM" id="CLU_2353063_0_0_2"/>
<dbReference type="OrthoDB" id="100740at2157"/>
<dbReference type="Proteomes" id="UP000002199">
    <property type="component" value="Chromosome"/>
</dbReference>
<gene>
    <name type="ordered locus">AF_2134</name>
</gene>